<evidence type="ECO:0000250" key="1"/>
<evidence type="ECO:0000250" key="2">
    <source>
        <dbReference type="UniProtKB" id="P47211"/>
    </source>
</evidence>
<evidence type="ECO:0000255" key="3"/>
<evidence type="ECO:0000255" key="4">
    <source>
        <dbReference type="PROSITE-ProRule" id="PRU00521"/>
    </source>
</evidence>
<evidence type="ECO:0000256" key="5">
    <source>
        <dbReference type="SAM" id="MobiDB-lite"/>
    </source>
</evidence>
<evidence type="ECO:0000269" key="6">
    <source>
    </source>
</evidence>
<keyword id="KW-1003">Cell membrane</keyword>
<keyword id="KW-1015">Disulfide bond</keyword>
<keyword id="KW-0297">G-protein coupled receptor</keyword>
<keyword id="KW-0325">Glycoprotein</keyword>
<keyword id="KW-0449">Lipoprotein</keyword>
<keyword id="KW-0472">Membrane</keyword>
<keyword id="KW-0564">Palmitate</keyword>
<keyword id="KW-0675">Receptor</keyword>
<keyword id="KW-1185">Reference proteome</keyword>
<keyword id="KW-0807">Transducer</keyword>
<keyword id="KW-0812">Transmembrane</keyword>
<keyword id="KW-1133">Transmembrane helix</keyword>
<feature type="chain" id="PRO_0000069465" description="Galanin receptor type 1">
    <location>
        <begin position="1"/>
        <end position="346"/>
    </location>
</feature>
<feature type="topological domain" description="Extracellular" evidence="3">
    <location>
        <begin position="1"/>
        <end position="33"/>
    </location>
</feature>
<feature type="transmembrane region" description="Helical; Name=1" evidence="3">
    <location>
        <begin position="34"/>
        <end position="54"/>
    </location>
</feature>
<feature type="topological domain" description="Cytoplasmic" evidence="3">
    <location>
        <begin position="55"/>
        <end position="69"/>
    </location>
</feature>
<feature type="transmembrane region" description="Helical; Name=2" evidence="3">
    <location>
        <begin position="70"/>
        <end position="90"/>
    </location>
</feature>
<feature type="topological domain" description="Extracellular" evidence="3">
    <location>
        <begin position="91"/>
        <end position="108"/>
    </location>
</feature>
<feature type="transmembrane region" description="Helical; Name=3" evidence="3">
    <location>
        <begin position="109"/>
        <end position="130"/>
    </location>
</feature>
<feature type="topological domain" description="Cytoplasmic" evidence="3">
    <location>
        <begin position="131"/>
        <end position="150"/>
    </location>
</feature>
<feature type="transmembrane region" description="Helical; Name=4" evidence="3">
    <location>
        <begin position="151"/>
        <end position="171"/>
    </location>
</feature>
<feature type="topological domain" description="Extracellular" evidence="3">
    <location>
        <begin position="172"/>
        <end position="196"/>
    </location>
</feature>
<feature type="transmembrane region" description="Helical; Name=5" evidence="3">
    <location>
        <begin position="197"/>
        <end position="217"/>
    </location>
</feature>
<feature type="topological domain" description="Cytoplasmic" evidence="3">
    <location>
        <begin position="218"/>
        <end position="246"/>
    </location>
</feature>
<feature type="transmembrane region" description="Helical; Name=6" evidence="3">
    <location>
        <begin position="247"/>
        <end position="267"/>
    </location>
</feature>
<feature type="topological domain" description="Extracellular" evidence="3">
    <location>
        <begin position="268"/>
        <end position="269"/>
    </location>
</feature>
<feature type="transmembrane region" description="Helical; Name=7" evidence="3">
    <location>
        <begin position="270"/>
        <end position="290"/>
    </location>
</feature>
<feature type="topological domain" description="Cytoplasmic" evidence="3">
    <location>
        <begin position="291"/>
        <end position="346"/>
    </location>
</feature>
<feature type="region of interest" description="Disordered" evidence="5">
    <location>
        <begin position="326"/>
        <end position="346"/>
    </location>
</feature>
<feature type="compositionally biased region" description="Basic and acidic residues" evidence="5">
    <location>
        <begin position="326"/>
        <end position="335"/>
    </location>
</feature>
<feature type="lipid moiety-binding region" description="S-palmitoyl cysteine" evidence="1">
    <location>
        <position position="318"/>
    </location>
</feature>
<feature type="glycosylation site" description="N-linked (GlcNAc...) asparagine" evidence="3">
    <location>
        <position position="7"/>
    </location>
</feature>
<feature type="glycosylation site" description="N-linked (GlcNAc...) asparagine" evidence="3">
    <location>
        <position position="12"/>
    </location>
</feature>
<feature type="glycosylation site" description="N-linked (GlcNAc...) asparagine" evidence="3">
    <location>
        <position position="181"/>
    </location>
</feature>
<feature type="disulfide bond" evidence="4">
    <location>
        <begin position="107"/>
        <end position="185"/>
    </location>
</feature>
<accession>Q62805</accession>
<gene>
    <name type="primary">Galr1</name>
    <name type="synonym">Galnr</name>
    <name type="synonym">Galnr1</name>
</gene>
<dbReference type="EMBL" id="U30290">
    <property type="protein sequence ID" value="AAC52438.1"/>
    <property type="molecule type" value="mRNA"/>
</dbReference>
<dbReference type="RefSeq" id="NP_037090.2">
    <property type="nucleotide sequence ID" value="NM_012958.3"/>
</dbReference>
<dbReference type="SMR" id="Q62805"/>
<dbReference type="FunCoup" id="Q62805">
    <property type="interactions" value="142"/>
</dbReference>
<dbReference type="STRING" id="10116.ENSRNOP00000022400"/>
<dbReference type="BindingDB" id="Q62805"/>
<dbReference type="ChEMBL" id="CHEMBL5504"/>
<dbReference type="GuidetoPHARMACOLOGY" id="243"/>
<dbReference type="GlyCosmos" id="Q62805">
    <property type="glycosylation" value="3 sites, No reported glycans"/>
</dbReference>
<dbReference type="GlyGen" id="Q62805">
    <property type="glycosylation" value="3 sites"/>
</dbReference>
<dbReference type="PhosphoSitePlus" id="Q62805"/>
<dbReference type="PaxDb" id="10116-ENSRNOP00000022400"/>
<dbReference type="Ensembl" id="ENSRNOT00000022401.3">
    <property type="protein sequence ID" value="ENSRNOP00000022400.1"/>
    <property type="gene ID" value="ENSRNOG00000016654.6"/>
</dbReference>
<dbReference type="GeneID" id="50577"/>
<dbReference type="KEGG" id="rno:50577"/>
<dbReference type="AGR" id="RGD:2656"/>
<dbReference type="CTD" id="2587"/>
<dbReference type="RGD" id="2656">
    <property type="gene designation" value="Galr1"/>
</dbReference>
<dbReference type="eggNOG" id="KOG3656">
    <property type="taxonomic scope" value="Eukaryota"/>
</dbReference>
<dbReference type="GeneTree" id="ENSGT01130000278263"/>
<dbReference type="HOGENOM" id="CLU_009579_6_4_1"/>
<dbReference type="InParanoid" id="Q62805"/>
<dbReference type="OMA" id="CWEQWPD"/>
<dbReference type="OrthoDB" id="2132067at2759"/>
<dbReference type="PhylomeDB" id="Q62805"/>
<dbReference type="TreeFam" id="TF315737"/>
<dbReference type="Reactome" id="R-RNO-375276">
    <property type="pathway name" value="Peptide ligand-binding receptors"/>
</dbReference>
<dbReference type="Reactome" id="R-RNO-418594">
    <property type="pathway name" value="G alpha (i) signalling events"/>
</dbReference>
<dbReference type="PRO" id="PR:Q62805"/>
<dbReference type="Proteomes" id="UP000002494">
    <property type="component" value="Chromosome 18"/>
</dbReference>
<dbReference type="Bgee" id="ENSRNOG00000016654">
    <property type="expression patterns" value="Expressed in jejunum and 5 other cell types or tissues"/>
</dbReference>
<dbReference type="GO" id="GO:0005886">
    <property type="term" value="C:plasma membrane"/>
    <property type="evidence" value="ECO:0000318"/>
    <property type="project" value="GO_Central"/>
</dbReference>
<dbReference type="GO" id="GO:0008528">
    <property type="term" value="F:G protein-coupled peptide receptor activity"/>
    <property type="evidence" value="ECO:0000318"/>
    <property type="project" value="GO_Central"/>
</dbReference>
<dbReference type="GO" id="GO:0004966">
    <property type="term" value="F:galanin receptor activity"/>
    <property type="evidence" value="ECO:0000314"/>
    <property type="project" value="RGD"/>
</dbReference>
<dbReference type="GO" id="GO:0042923">
    <property type="term" value="F:neuropeptide binding"/>
    <property type="evidence" value="ECO:0000314"/>
    <property type="project" value="RGD"/>
</dbReference>
<dbReference type="GO" id="GO:0017046">
    <property type="term" value="F:peptide hormone binding"/>
    <property type="evidence" value="ECO:0000250"/>
    <property type="project" value="UniProtKB"/>
</dbReference>
<dbReference type="GO" id="GO:0007189">
    <property type="term" value="P:adenylate cyclase-activating G protein-coupled receptor signaling pathway"/>
    <property type="evidence" value="ECO:0000315"/>
    <property type="project" value="RGD"/>
</dbReference>
<dbReference type="GO" id="GO:0007186">
    <property type="term" value="P:G protein-coupled receptor signaling pathway"/>
    <property type="evidence" value="ECO:0000314"/>
    <property type="project" value="RGD"/>
</dbReference>
<dbReference type="GO" id="GO:0007218">
    <property type="term" value="P:neuropeptide signaling pathway"/>
    <property type="evidence" value="ECO:0000318"/>
    <property type="project" value="GO_Central"/>
</dbReference>
<dbReference type="GO" id="GO:0051464">
    <property type="term" value="P:positive regulation of cortisol secretion"/>
    <property type="evidence" value="ECO:0000266"/>
    <property type="project" value="RGD"/>
</dbReference>
<dbReference type="GO" id="GO:0007204">
    <property type="term" value="P:positive regulation of cytosolic calcium ion concentration"/>
    <property type="evidence" value="ECO:0007669"/>
    <property type="project" value="InterPro"/>
</dbReference>
<dbReference type="GO" id="GO:0045944">
    <property type="term" value="P:positive regulation of transcription by RNA polymerase II"/>
    <property type="evidence" value="ECO:0000250"/>
    <property type="project" value="UniProtKB"/>
</dbReference>
<dbReference type="CDD" id="cd15098">
    <property type="entry name" value="7tmA_Gal1_R"/>
    <property type="match status" value="1"/>
</dbReference>
<dbReference type="FunFam" id="1.20.1070.10:FF:000135">
    <property type="entry name" value="galanin receptor type 1"/>
    <property type="match status" value="1"/>
</dbReference>
<dbReference type="Gene3D" id="1.20.1070.10">
    <property type="entry name" value="Rhodopsin 7-helix transmembrane proteins"/>
    <property type="match status" value="1"/>
</dbReference>
<dbReference type="InterPro" id="IPR003906">
    <property type="entry name" value="GAL1_rcpt"/>
</dbReference>
<dbReference type="InterPro" id="IPR000405">
    <property type="entry name" value="Galanin_rcpt"/>
</dbReference>
<dbReference type="InterPro" id="IPR000276">
    <property type="entry name" value="GPCR_Rhodpsn"/>
</dbReference>
<dbReference type="InterPro" id="IPR017452">
    <property type="entry name" value="GPCR_Rhodpsn_7TM"/>
</dbReference>
<dbReference type="PANTHER" id="PTHR45695:SF25">
    <property type="entry name" value="GALANIN RECEPTOR 1"/>
    <property type="match status" value="1"/>
</dbReference>
<dbReference type="PANTHER" id="PTHR45695">
    <property type="entry name" value="LEUCOKININ RECEPTOR-RELATED"/>
    <property type="match status" value="1"/>
</dbReference>
<dbReference type="Pfam" id="PF00001">
    <property type="entry name" value="7tm_1"/>
    <property type="match status" value="1"/>
</dbReference>
<dbReference type="PRINTS" id="PR01418">
    <property type="entry name" value="GALANIN1R"/>
</dbReference>
<dbReference type="PRINTS" id="PR00663">
    <property type="entry name" value="GALANINR"/>
</dbReference>
<dbReference type="PRINTS" id="PR00237">
    <property type="entry name" value="GPCRRHODOPSN"/>
</dbReference>
<dbReference type="SMART" id="SM01381">
    <property type="entry name" value="7TM_GPCR_Srsx"/>
    <property type="match status" value="1"/>
</dbReference>
<dbReference type="SUPFAM" id="SSF81321">
    <property type="entry name" value="Family A G protein-coupled receptor-like"/>
    <property type="match status" value="1"/>
</dbReference>
<dbReference type="PROSITE" id="PS00237">
    <property type="entry name" value="G_PROTEIN_RECEP_F1_1"/>
    <property type="match status" value="1"/>
</dbReference>
<dbReference type="PROSITE" id="PS50262">
    <property type="entry name" value="G_PROTEIN_RECEP_F1_2"/>
    <property type="match status" value="1"/>
</dbReference>
<protein>
    <recommendedName>
        <fullName>Galanin receptor type 1</fullName>
        <shortName>GAL1-R</shortName>
        <shortName>GALR-1</shortName>
    </recommendedName>
</protein>
<proteinExistence type="evidence at transcript level"/>
<sequence>MELAPVNLSEGNGSDPEPPAEPRPLFGIGVENFITLVVFGLIFAMGVLGNSLVITVLARSKPGKPRSTTNLFILNLSIADLAYLLFCIPFQATVYALPTWVLGAFICKFIHYFFTVSMLVSIFTLAAMSVDRYVAIVHSRRSSSLRVSRNALLGVGFIWALSIAMASPVAYYQRLFHRDSNQTFCWEHWPNQLHKKAYVVCTFVFGYLLPLLLICFCYAKVLNHLHKKLKNMSKKSEASKKKTAQTVLVVVVVFGISWLPHHVIHLWAEFGAFPLTPASFFFRITAHCLAYSNSSVNPIIYAFLSENFRKAYKQVFKCRVCNESPHGDAKEKNRIDTPPSTNCTHV</sequence>
<reference key="1">
    <citation type="journal article" date="1995" name="Brain Res. Mol. Brain Res.">
        <title>Cloning and characterization of the rat GALR1 galanin receptor from Rin14B insulinoma cells.</title>
        <authorList>
            <person name="Parker E.M."/>
            <person name="Izzarelli D.G."/>
            <person name="Nowak H.P."/>
            <person name="Mahle C.D."/>
            <person name="Iben L.G."/>
            <person name="Wang J."/>
            <person name="Goldstein M.E."/>
        </authorList>
    </citation>
    <scope>NUCLEOTIDE SEQUENCE [MRNA]</scope>
    <scope>FUNCTION</scope>
    <scope>TISSUE SPECIFICITY</scope>
    <source>
        <tissue>Insulinoma</tissue>
    </source>
</reference>
<comment type="function">
    <text evidence="2 6">Receptor for the hormone galanin. The activity of this receptor is mediated by G proteins that inhibit adenylate cyclase activity.</text>
</comment>
<comment type="subunit">
    <text evidence="2">Interacts with GRP39 AND HTR1A.</text>
</comment>
<comment type="subcellular location">
    <subcellularLocation>
        <location evidence="2">Cell membrane</location>
        <topology>Multi-pass membrane protein</topology>
    </subcellularLocation>
</comment>
<comment type="tissue specificity">
    <text evidence="6">Spinal cord, small intestine, Rin14B insulinoma cells and several brain regions, particularly ventral hippocampus, amygdala, supraoptic nucleus, hypothalamus, thalamus, lateral parabrachial nucleus and locus coeruleus.</text>
</comment>
<comment type="PTM">
    <text>Three cysteine residues are found in the C-terminus, at least one of which may be palmitoylated.</text>
</comment>
<comment type="similarity">
    <text evidence="4">Belongs to the G-protein coupled receptor 1 family.</text>
</comment>
<name>GALR1_RAT</name>
<organism>
    <name type="scientific">Rattus norvegicus</name>
    <name type="common">Rat</name>
    <dbReference type="NCBI Taxonomy" id="10116"/>
    <lineage>
        <taxon>Eukaryota</taxon>
        <taxon>Metazoa</taxon>
        <taxon>Chordata</taxon>
        <taxon>Craniata</taxon>
        <taxon>Vertebrata</taxon>
        <taxon>Euteleostomi</taxon>
        <taxon>Mammalia</taxon>
        <taxon>Eutheria</taxon>
        <taxon>Euarchontoglires</taxon>
        <taxon>Glires</taxon>
        <taxon>Rodentia</taxon>
        <taxon>Myomorpha</taxon>
        <taxon>Muroidea</taxon>
        <taxon>Muridae</taxon>
        <taxon>Murinae</taxon>
        <taxon>Rattus</taxon>
    </lineage>
</organism>